<evidence type="ECO:0000250" key="1">
    <source>
        <dbReference type="UniProtKB" id="P55057"/>
    </source>
</evidence>
<evidence type="ECO:0000303" key="2">
    <source>
    </source>
</evidence>
<evidence type="ECO:0000305" key="3"/>
<organism>
    <name type="scientific">Rattus norvegicus</name>
    <name type="common">Rat</name>
    <dbReference type="NCBI Taxonomy" id="10116"/>
    <lineage>
        <taxon>Eukaryota</taxon>
        <taxon>Metazoa</taxon>
        <taxon>Chordata</taxon>
        <taxon>Craniata</taxon>
        <taxon>Vertebrata</taxon>
        <taxon>Euteleostomi</taxon>
        <taxon>Mammalia</taxon>
        <taxon>Eutheria</taxon>
        <taxon>Euarchontoglires</taxon>
        <taxon>Glires</taxon>
        <taxon>Rodentia</taxon>
        <taxon>Myomorpha</taxon>
        <taxon>Muroidea</taxon>
        <taxon>Muridae</taxon>
        <taxon>Murinae</taxon>
        <taxon>Rattus</taxon>
    </lineage>
</organism>
<feature type="signal peptide" evidence="1">
    <location>
        <begin position="1"/>
        <end position="27"/>
    </location>
</feature>
<feature type="chain" id="PRO_0000002039" description="Apolipoprotein C-IV">
    <location>
        <begin position="28"/>
        <end position="124"/>
    </location>
</feature>
<feature type="splice variant" id="VSP_022002" description="In isoform 2." evidence="2">
    <location>
        <begin position="70"/>
        <end position="124"/>
    </location>
</feature>
<gene>
    <name type="primary">Apoc4</name>
    <name type="synonym">Ecl</name>
</gene>
<keyword id="KW-0025">Alternative splicing</keyword>
<keyword id="KW-0445">Lipid transport</keyword>
<keyword id="KW-1185">Reference proteome</keyword>
<keyword id="KW-0964">Secreted</keyword>
<keyword id="KW-0732">Signal</keyword>
<keyword id="KW-0813">Transport</keyword>
<accession>P55797</accession>
<sequence>MSLLRCRQQTLPSLCLSVLFLACFVASMPTESLTPTPGPENSRWSLVRARVMEMVEPLVTRTRDRWRWFWGPRAIQGFVQTYYEDHLKDLGPRTQAWLQSSRDHLLNKTHSLCPRLLCRDWTQG</sequence>
<proteinExistence type="evidence at transcript level"/>
<comment type="function">
    <text>May participate in lipoprotein metabolism.</text>
</comment>
<comment type="subcellular location">
    <subcellularLocation>
        <location>Secreted</location>
    </subcellularLocation>
</comment>
<comment type="alternative products">
    <event type="alternative splicing"/>
    <isoform>
        <id>P55797-1</id>
        <name>1</name>
        <sequence type="displayed"/>
    </isoform>
    <isoform>
        <id>P55797-2</id>
        <name>2</name>
        <sequence type="described" ref="VSP_022002"/>
    </isoform>
</comment>
<comment type="similarity">
    <text evidence="3">Belongs to the apolipoprotein C4 family.</text>
</comment>
<comment type="sequence caution" evidence="3">
    <conflict type="erroneous translation">
        <sequence resource="EMBL-CDS" id="CAA39653"/>
    </conflict>
    <text>Wrong choice of frame.</text>
</comment>
<reference key="1">
    <citation type="journal article" date="1992" name="Arch. Biochem. Biophys.">
        <title>Two coding regions closely linked to the rat apolipoprotein E gene: nucleotide sequences of rat apolipoprotein C-I and ECL cDNA.</title>
        <authorList>
            <person name="Shen P."/>
            <person name="Howlett G.J."/>
        </authorList>
    </citation>
    <scope>NUCLEOTIDE SEQUENCE [MRNA] (ISOFORM 2)</scope>
</reference>
<reference key="2">
    <citation type="submission" date="2001-08" db="EMBL/GenBank/DDBJ databases">
        <authorList>
            <person name="Lee N.H."/>
            <person name="Glodek A."/>
            <person name="Chandra I."/>
            <person name="Mason T.M."/>
            <person name="Quackenbush J."/>
            <person name="Kerlavage A.R."/>
            <person name="Adams M.D."/>
        </authorList>
    </citation>
    <scope>NUCLEOTIDE SEQUENCE [LARGE SCALE MRNA] (ISOFORM 1)</scope>
</reference>
<protein>
    <recommendedName>
        <fullName>Apolipoprotein C-IV</fullName>
        <shortName>Apo-CIV</shortName>
        <shortName>ApoC-IV</shortName>
    </recommendedName>
    <alternativeName>
        <fullName>Apolipoprotein C4</fullName>
    </alternativeName>
    <alternativeName>
        <fullName>Apolipoprotein E-linked</fullName>
    </alternativeName>
    <alternativeName>
        <fullName>ECL</fullName>
    </alternativeName>
</protein>
<name>APOC4_RAT</name>
<dbReference type="EMBL" id="X56190">
    <property type="protein sequence ID" value="CAA39653.1"/>
    <property type="status" value="ALT_SEQ"/>
    <property type="molecule type" value="mRNA"/>
</dbReference>
<dbReference type="EMBL" id="AA945171">
    <property type="status" value="NOT_ANNOTATED_CDS"/>
    <property type="molecule type" value="mRNA"/>
</dbReference>
<dbReference type="PIR" id="S25719">
    <property type="entry name" value="S25719"/>
</dbReference>
<dbReference type="RefSeq" id="NP_001102889.1">
    <molecule id="P55797-1"/>
    <property type="nucleotide sequence ID" value="NM_001109419.1"/>
</dbReference>
<dbReference type="FunCoup" id="P55797">
    <property type="interactions" value="31"/>
</dbReference>
<dbReference type="IntAct" id="P55797">
    <property type="interactions" value="1"/>
</dbReference>
<dbReference type="STRING" id="10116.ENSRNOP00000024832"/>
<dbReference type="GlyGen" id="P55797">
    <property type="glycosylation" value="1 site"/>
</dbReference>
<dbReference type="iPTMnet" id="P55797"/>
<dbReference type="PhosphoSitePlus" id="P55797"/>
<dbReference type="PaxDb" id="10116-ENSRNOP00000024832"/>
<dbReference type="Ensembl" id="ENSRNOT00000024832.8">
    <molecule id="P55797-1"/>
    <property type="protein sequence ID" value="ENSRNOP00000024832.4"/>
    <property type="gene ID" value="ENSRNOG00000018405.8"/>
</dbReference>
<dbReference type="GeneID" id="680551"/>
<dbReference type="KEGG" id="rno:680551"/>
<dbReference type="UCSC" id="RGD:70959">
    <molecule id="P55797-1"/>
    <property type="organism name" value="rat"/>
</dbReference>
<dbReference type="AGR" id="RGD:70959"/>
<dbReference type="CTD" id="346"/>
<dbReference type="RGD" id="70959">
    <property type="gene designation" value="Apoc4"/>
</dbReference>
<dbReference type="eggNOG" id="ENOG502TE52">
    <property type="taxonomic scope" value="Eukaryota"/>
</dbReference>
<dbReference type="GeneTree" id="ENSGT00390000015914"/>
<dbReference type="HOGENOM" id="CLU_161459_0_0_1"/>
<dbReference type="InParanoid" id="P55797"/>
<dbReference type="OMA" id="KWQWFWG"/>
<dbReference type="OrthoDB" id="9449255at2759"/>
<dbReference type="PhylomeDB" id="P55797"/>
<dbReference type="TreeFam" id="TF336879"/>
<dbReference type="Reactome" id="R-RNO-8866423">
    <property type="pathway name" value="VLDL assembly"/>
</dbReference>
<dbReference type="Reactome" id="R-RNO-8964046">
    <property type="pathway name" value="VLDL clearance"/>
</dbReference>
<dbReference type="PRO" id="PR:P55797"/>
<dbReference type="Proteomes" id="UP000002494">
    <property type="component" value="Chromosome 1"/>
</dbReference>
<dbReference type="Bgee" id="ENSRNOG00000018405">
    <property type="expression patterns" value="Expressed in liver and 15 other cell types or tissues"/>
</dbReference>
<dbReference type="GO" id="GO:0034364">
    <property type="term" value="C:high-density lipoprotein particle"/>
    <property type="evidence" value="ECO:0000266"/>
    <property type="project" value="RGD"/>
</dbReference>
<dbReference type="GO" id="GO:0034361">
    <property type="term" value="C:very-low-density lipoprotein particle"/>
    <property type="evidence" value="ECO:0000266"/>
    <property type="project" value="RGD"/>
</dbReference>
<dbReference type="GO" id="GO:0019915">
    <property type="term" value="P:lipid storage"/>
    <property type="evidence" value="ECO:0000266"/>
    <property type="project" value="RGD"/>
</dbReference>
<dbReference type="GO" id="GO:0006869">
    <property type="term" value="P:lipid transport"/>
    <property type="evidence" value="ECO:0007669"/>
    <property type="project" value="UniProtKB-KW"/>
</dbReference>
<dbReference type="GO" id="GO:0010890">
    <property type="term" value="P:positive regulation of triglyceride storage"/>
    <property type="evidence" value="ECO:0000318"/>
    <property type="project" value="GO_Central"/>
</dbReference>
<dbReference type="GO" id="GO:0070328">
    <property type="term" value="P:triglyceride homeostasis"/>
    <property type="evidence" value="ECO:0000266"/>
    <property type="project" value="RGD"/>
</dbReference>
<dbReference type="InterPro" id="IPR028120">
    <property type="entry name" value="APOC4"/>
</dbReference>
<dbReference type="PANTHER" id="PTHR32288">
    <property type="entry name" value="APOLIPOPROTEIN C-IV"/>
    <property type="match status" value="1"/>
</dbReference>
<dbReference type="PANTHER" id="PTHR32288:SF0">
    <property type="entry name" value="APOLIPOPROTEIN C-IV"/>
    <property type="match status" value="1"/>
</dbReference>
<dbReference type="Pfam" id="PF15119">
    <property type="entry name" value="APOC4"/>
    <property type="match status" value="1"/>
</dbReference>